<accession>P59716</accession>
<accession>Q6HS48</accession>
<accession>Q6KLE8</accession>
<sequence>MRLRHKPYAMDRINEYSHIVIGNPEERAGNWKEVFGNEQPIHIEVGTGRGRFMYDMAKANPHINYIGIEKFTSVVVDALDKLIEEELPNLKLINKDAEDLTVFFAKGEIDRVYLNFSDPWPKKRHTKRRLTYKTFLRNYEEVLVEGGEIHFKTDNQGLFEYSLMSMAEYGMLLTYLSLDLHNSDFEGNIMTEYEEKFSSKGHRIYRVEAKYRTEPMQ</sequence>
<comment type="function">
    <text evidence="2">Catalyzes the formation of N(7)-methylguanine at position 46 (m7G46) in tRNA.</text>
</comment>
<comment type="catalytic activity">
    <reaction evidence="2">
        <text>guanosine(46) in tRNA + S-adenosyl-L-methionine = N(7)-methylguanosine(46) in tRNA + S-adenosyl-L-homocysteine</text>
        <dbReference type="Rhea" id="RHEA:42708"/>
        <dbReference type="Rhea" id="RHEA-COMP:10188"/>
        <dbReference type="Rhea" id="RHEA-COMP:10189"/>
        <dbReference type="ChEBI" id="CHEBI:57856"/>
        <dbReference type="ChEBI" id="CHEBI:59789"/>
        <dbReference type="ChEBI" id="CHEBI:74269"/>
        <dbReference type="ChEBI" id="CHEBI:74480"/>
        <dbReference type="EC" id="2.1.1.33"/>
    </reaction>
</comment>
<comment type="pathway">
    <text evidence="2">tRNA modification; N(7)-methylguanine-tRNA biosynthesis.</text>
</comment>
<comment type="similarity">
    <text evidence="2">Belongs to the class I-like SAM-binding methyltransferase superfamily. TrmB family.</text>
</comment>
<protein>
    <recommendedName>
        <fullName evidence="2">tRNA (guanine-N(7)-)-methyltransferase</fullName>
        <ecNumber evidence="2">2.1.1.33</ecNumber>
    </recommendedName>
    <alternativeName>
        <fullName evidence="2">tRNA (guanine(46)-N(7))-methyltransferase</fullName>
    </alternativeName>
    <alternativeName>
        <fullName evidence="2">tRNA(m7G46)-methyltransferase</fullName>
    </alternativeName>
</protein>
<proteinExistence type="inferred from homology"/>
<evidence type="ECO:0000250" key="1"/>
<evidence type="ECO:0000255" key="2">
    <source>
        <dbReference type="HAMAP-Rule" id="MF_01057"/>
    </source>
</evidence>
<organism>
    <name type="scientific">Bacillus anthracis</name>
    <dbReference type="NCBI Taxonomy" id="1392"/>
    <lineage>
        <taxon>Bacteria</taxon>
        <taxon>Bacillati</taxon>
        <taxon>Bacillota</taxon>
        <taxon>Bacilli</taxon>
        <taxon>Bacillales</taxon>
        <taxon>Bacillaceae</taxon>
        <taxon>Bacillus</taxon>
        <taxon>Bacillus cereus group</taxon>
    </lineage>
</organism>
<reference key="1">
    <citation type="journal article" date="2003" name="Nature">
        <title>The genome sequence of Bacillus anthracis Ames and comparison to closely related bacteria.</title>
        <authorList>
            <person name="Read T.D."/>
            <person name="Peterson S.N."/>
            <person name="Tourasse N.J."/>
            <person name="Baillie L.W."/>
            <person name="Paulsen I.T."/>
            <person name="Nelson K.E."/>
            <person name="Tettelin H."/>
            <person name="Fouts D.E."/>
            <person name="Eisen J.A."/>
            <person name="Gill S.R."/>
            <person name="Holtzapple E.K."/>
            <person name="Okstad O.A."/>
            <person name="Helgason E."/>
            <person name="Rilstone J."/>
            <person name="Wu M."/>
            <person name="Kolonay J.F."/>
            <person name="Beanan M.J."/>
            <person name="Dodson R.J."/>
            <person name="Brinkac L.M."/>
            <person name="Gwinn M.L."/>
            <person name="DeBoy R.T."/>
            <person name="Madpu R."/>
            <person name="Daugherty S.C."/>
            <person name="Durkin A.S."/>
            <person name="Haft D.H."/>
            <person name="Nelson W.C."/>
            <person name="Peterson J.D."/>
            <person name="Pop M."/>
            <person name="Khouri H.M."/>
            <person name="Radune D."/>
            <person name="Benton J.L."/>
            <person name="Mahamoud Y."/>
            <person name="Jiang L."/>
            <person name="Hance I.R."/>
            <person name="Weidman J.F."/>
            <person name="Berry K.J."/>
            <person name="Plaut R.D."/>
            <person name="Wolf A.M."/>
            <person name="Watkins K.L."/>
            <person name="Nierman W.C."/>
            <person name="Hazen A."/>
            <person name="Cline R.T."/>
            <person name="Redmond C."/>
            <person name="Thwaite J.E."/>
            <person name="White O."/>
            <person name="Salzberg S.L."/>
            <person name="Thomason B."/>
            <person name="Friedlander A.M."/>
            <person name="Koehler T.M."/>
            <person name="Hanna P.C."/>
            <person name="Kolstoe A.-B."/>
            <person name="Fraser C.M."/>
        </authorList>
    </citation>
    <scope>NUCLEOTIDE SEQUENCE [LARGE SCALE GENOMIC DNA]</scope>
    <source>
        <strain>Ames / isolate Porton</strain>
    </source>
</reference>
<reference key="2">
    <citation type="journal article" date="2009" name="J. Bacteriol.">
        <title>The complete genome sequence of Bacillus anthracis Ames 'Ancestor'.</title>
        <authorList>
            <person name="Ravel J."/>
            <person name="Jiang L."/>
            <person name="Stanley S.T."/>
            <person name="Wilson M.R."/>
            <person name="Decker R.S."/>
            <person name="Read T.D."/>
            <person name="Worsham P."/>
            <person name="Keim P.S."/>
            <person name="Salzberg S.L."/>
            <person name="Fraser-Liggett C.M."/>
            <person name="Rasko D.A."/>
        </authorList>
    </citation>
    <scope>NUCLEOTIDE SEQUENCE [LARGE SCALE GENOMIC DNA]</scope>
    <source>
        <strain>Ames ancestor</strain>
    </source>
</reference>
<reference key="3">
    <citation type="submission" date="2004-01" db="EMBL/GenBank/DDBJ databases">
        <title>Complete genome sequence of Bacillus anthracis Sterne.</title>
        <authorList>
            <person name="Brettin T.S."/>
            <person name="Bruce D."/>
            <person name="Challacombe J.F."/>
            <person name="Gilna P."/>
            <person name="Han C."/>
            <person name="Hill K."/>
            <person name="Hitchcock P."/>
            <person name="Jackson P."/>
            <person name="Keim P."/>
            <person name="Longmire J."/>
            <person name="Lucas S."/>
            <person name="Okinaka R."/>
            <person name="Richardson P."/>
            <person name="Rubin E."/>
            <person name="Tice H."/>
        </authorList>
    </citation>
    <scope>NUCLEOTIDE SEQUENCE [LARGE SCALE GENOMIC DNA]</scope>
    <source>
        <strain>Sterne</strain>
    </source>
</reference>
<feature type="chain" id="PRO_0000171288" description="tRNA (guanine-N(7)-)-methyltransferase">
    <location>
        <begin position="1"/>
        <end position="217"/>
    </location>
</feature>
<feature type="active site" evidence="1">
    <location>
        <position position="118"/>
    </location>
</feature>
<feature type="binding site" evidence="2">
    <location>
        <position position="44"/>
    </location>
    <ligand>
        <name>S-adenosyl-L-methionine</name>
        <dbReference type="ChEBI" id="CHEBI:59789"/>
    </ligand>
</feature>
<feature type="binding site" evidence="2">
    <location>
        <position position="69"/>
    </location>
    <ligand>
        <name>S-adenosyl-L-methionine</name>
        <dbReference type="ChEBI" id="CHEBI:59789"/>
    </ligand>
</feature>
<feature type="binding site" evidence="2">
    <location>
        <position position="96"/>
    </location>
    <ligand>
        <name>S-adenosyl-L-methionine</name>
        <dbReference type="ChEBI" id="CHEBI:59789"/>
    </ligand>
</feature>
<feature type="binding site" evidence="2">
    <location>
        <position position="118"/>
    </location>
    <ligand>
        <name>S-adenosyl-L-methionine</name>
        <dbReference type="ChEBI" id="CHEBI:59789"/>
    </ligand>
</feature>
<feature type="binding site" evidence="2">
    <location>
        <position position="122"/>
    </location>
    <ligand>
        <name>substrate</name>
    </ligand>
</feature>
<feature type="binding site" evidence="2">
    <location>
        <position position="154"/>
    </location>
    <ligand>
        <name>substrate</name>
    </ligand>
</feature>
<feature type="binding site" evidence="2">
    <location>
        <begin position="191"/>
        <end position="194"/>
    </location>
    <ligand>
        <name>substrate</name>
    </ligand>
</feature>
<name>TRMB_BACAN</name>
<dbReference type="EC" id="2.1.1.33" evidence="2"/>
<dbReference type="EMBL" id="AE016879">
    <property type="protein sequence ID" value="AAP28633.1"/>
    <property type="molecule type" value="Genomic_DNA"/>
</dbReference>
<dbReference type="EMBL" id="AE017334">
    <property type="protein sequence ID" value="AAT34070.1"/>
    <property type="molecule type" value="Genomic_DNA"/>
</dbReference>
<dbReference type="EMBL" id="AE017225">
    <property type="protein sequence ID" value="AAT56890.1"/>
    <property type="molecule type" value="Genomic_DNA"/>
</dbReference>
<dbReference type="RefSeq" id="NP_847147.1">
    <property type="nucleotide sequence ID" value="NC_003997.3"/>
</dbReference>
<dbReference type="RefSeq" id="WP_001239380.1">
    <property type="nucleotide sequence ID" value="NZ_WXXJ01000026.1"/>
</dbReference>
<dbReference type="RefSeq" id="YP_030840.1">
    <property type="nucleotide sequence ID" value="NC_005945.1"/>
</dbReference>
<dbReference type="SMR" id="P59716"/>
<dbReference type="STRING" id="261594.GBAA_4950"/>
<dbReference type="DNASU" id="1084155"/>
<dbReference type="GeneID" id="75087864"/>
<dbReference type="KEGG" id="ban:BA_4950"/>
<dbReference type="KEGG" id="bar:GBAA_4950"/>
<dbReference type="KEGG" id="bat:BAS4594"/>
<dbReference type="PATRIC" id="fig|198094.11.peg.4909"/>
<dbReference type="eggNOG" id="COG0220">
    <property type="taxonomic scope" value="Bacteria"/>
</dbReference>
<dbReference type="HOGENOM" id="CLU_050910_2_1_9"/>
<dbReference type="OMA" id="PDPQIKY"/>
<dbReference type="OrthoDB" id="9802090at2"/>
<dbReference type="UniPathway" id="UPA00989"/>
<dbReference type="Proteomes" id="UP000000427">
    <property type="component" value="Chromosome"/>
</dbReference>
<dbReference type="Proteomes" id="UP000000594">
    <property type="component" value="Chromosome"/>
</dbReference>
<dbReference type="GO" id="GO:0043527">
    <property type="term" value="C:tRNA methyltransferase complex"/>
    <property type="evidence" value="ECO:0007669"/>
    <property type="project" value="TreeGrafter"/>
</dbReference>
<dbReference type="GO" id="GO:0008176">
    <property type="term" value="F:tRNA (guanine(46)-N7)-methyltransferase activity"/>
    <property type="evidence" value="ECO:0007669"/>
    <property type="project" value="UniProtKB-UniRule"/>
</dbReference>
<dbReference type="CDD" id="cd02440">
    <property type="entry name" value="AdoMet_MTases"/>
    <property type="match status" value="1"/>
</dbReference>
<dbReference type="FunFam" id="3.40.50.150:FF:000035">
    <property type="entry name" value="tRNA (guanine-N(7)-)-methyltransferase"/>
    <property type="match status" value="1"/>
</dbReference>
<dbReference type="Gene3D" id="3.40.50.150">
    <property type="entry name" value="Vaccinia Virus protein VP39"/>
    <property type="match status" value="1"/>
</dbReference>
<dbReference type="HAMAP" id="MF_01057">
    <property type="entry name" value="tRNA_methyltr_TrmB"/>
    <property type="match status" value="1"/>
</dbReference>
<dbReference type="InterPro" id="IPR029063">
    <property type="entry name" value="SAM-dependent_MTases_sf"/>
</dbReference>
<dbReference type="InterPro" id="IPR003358">
    <property type="entry name" value="tRNA_(Gua-N-7)_MeTrfase_Trmb"/>
</dbReference>
<dbReference type="InterPro" id="IPR055361">
    <property type="entry name" value="tRNA_methyltr_TrmB_bact"/>
</dbReference>
<dbReference type="NCBIfam" id="NF001080">
    <property type="entry name" value="PRK00121.2-2"/>
    <property type="match status" value="1"/>
</dbReference>
<dbReference type="NCBIfam" id="TIGR00091">
    <property type="entry name" value="tRNA (guanosine(46)-N7)-methyltransferase TrmB"/>
    <property type="match status" value="1"/>
</dbReference>
<dbReference type="PANTHER" id="PTHR23417">
    <property type="entry name" value="3-DEOXY-D-MANNO-OCTULOSONIC-ACID TRANSFERASE/TRNA GUANINE-N 7 - -METHYLTRANSFERASE"/>
    <property type="match status" value="1"/>
</dbReference>
<dbReference type="PANTHER" id="PTHR23417:SF14">
    <property type="entry name" value="PENTACOTRIPEPTIDE-REPEAT REGION OF PRORP DOMAIN-CONTAINING PROTEIN"/>
    <property type="match status" value="1"/>
</dbReference>
<dbReference type="Pfam" id="PF02390">
    <property type="entry name" value="Methyltransf_4"/>
    <property type="match status" value="1"/>
</dbReference>
<dbReference type="SUPFAM" id="SSF53335">
    <property type="entry name" value="S-adenosyl-L-methionine-dependent methyltransferases"/>
    <property type="match status" value="1"/>
</dbReference>
<dbReference type="PROSITE" id="PS51625">
    <property type="entry name" value="SAM_MT_TRMB"/>
    <property type="match status" value="1"/>
</dbReference>
<keyword id="KW-0489">Methyltransferase</keyword>
<keyword id="KW-1185">Reference proteome</keyword>
<keyword id="KW-0949">S-adenosyl-L-methionine</keyword>
<keyword id="KW-0808">Transferase</keyword>
<keyword id="KW-0819">tRNA processing</keyword>
<gene>
    <name evidence="2" type="primary">trmB</name>
    <name type="ordered locus">BA_4950</name>
    <name type="ordered locus">GBAA_4950</name>
    <name type="ordered locus">BAS4594</name>
</gene>